<evidence type="ECO:0000250" key="1">
    <source>
        <dbReference type="UniProtKB" id="A0A6C0WW36"/>
    </source>
</evidence>
<evidence type="ECO:0000250" key="2">
    <source>
        <dbReference type="UniProtKB" id="Q2HXI6"/>
    </source>
</evidence>
<evidence type="ECO:0000250" key="3">
    <source>
        <dbReference type="UniProtKB" id="Q9FLN8"/>
    </source>
</evidence>
<evidence type="ECO:0000250" key="4">
    <source>
        <dbReference type="UniProtKB" id="Q9FZN8"/>
    </source>
</evidence>
<evidence type="ECO:0000303" key="5">
    <source ref="1"/>
</evidence>
<evidence type="ECO:0000305" key="6"/>
<gene>
    <name evidence="5" type="primary">TCS2</name>
</gene>
<protein>
    <recommendedName>
        <fullName evidence="5">Probable caffeine synthase 2</fullName>
        <ecNumber evidence="4">2.1.1.160</ecNumber>
    </recommendedName>
</protein>
<proteinExistence type="evidence at transcript level"/>
<dbReference type="EC" id="2.1.1.160" evidence="4"/>
<dbReference type="EMBL" id="AB031281">
    <property type="protein sequence ID" value="BAD42854.1"/>
    <property type="molecule type" value="mRNA"/>
</dbReference>
<dbReference type="EMBL" id="AY907710">
    <property type="protein sequence ID" value="AAW88351.1"/>
    <property type="molecule type" value="mRNA"/>
</dbReference>
<dbReference type="EMBL" id="JX647691">
    <property type="protein sequence ID" value="AFV99129.1"/>
    <property type="molecule type" value="Genomic_DNA"/>
</dbReference>
<dbReference type="EMBL" id="FJ554589">
    <property type="protein sequence ID" value="ACM07420.1"/>
    <property type="molecule type" value="mRNA"/>
</dbReference>
<dbReference type="EMBL" id="HM003356">
    <property type="protein sequence ID" value="AEC11049.1"/>
    <property type="molecule type" value="mRNA"/>
</dbReference>
<dbReference type="SMR" id="Q68CM3"/>
<dbReference type="BRENDA" id="2.1.1.160">
    <property type="organism ID" value="1084"/>
</dbReference>
<dbReference type="GO" id="GO:0102741">
    <property type="term" value="F:caffeine synthase activity"/>
    <property type="evidence" value="ECO:0007669"/>
    <property type="project" value="UniProtKB-EC"/>
</dbReference>
<dbReference type="GO" id="GO:0046872">
    <property type="term" value="F:metal ion binding"/>
    <property type="evidence" value="ECO:0007669"/>
    <property type="project" value="UniProtKB-KW"/>
</dbReference>
<dbReference type="GO" id="GO:0009820">
    <property type="term" value="P:alkaloid metabolic process"/>
    <property type="evidence" value="ECO:0007669"/>
    <property type="project" value="UniProtKB-KW"/>
</dbReference>
<dbReference type="GO" id="GO:0032259">
    <property type="term" value="P:methylation"/>
    <property type="evidence" value="ECO:0007669"/>
    <property type="project" value="UniProtKB-KW"/>
</dbReference>
<dbReference type="Gene3D" id="1.10.1200.270">
    <property type="entry name" value="Methyltransferase, alpha-helical capping domain"/>
    <property type="match status" value="1"/>
</dbReference>
<dbReference type="Gene3D" id="3.40.50.150">
    <property type="entry name" value="Vaccinia Virus protein VP39"/>
    <property type="match status" value="1"/>
</dbReference>
<dbReference type="InterPro" id="IPR005299">
    <property type="entry name" value="MeTrfase_7"/>
</dbReference>
<dbReference type="InterPro" id="IPR042086">
    <property type="entry name" value="MeTrfase_capping"/>
</dbReference>
<dbReference type="InterPro" id="IPR029063">
    <property type="entry name" value="SAM-dependent_MTases_sf"/>
</dbReference>
<dbReference type="PANTHER" id="PTHR31009">
    <property type="entry name" value="S-ADENOSYL-L-METHIONINE:CARBOXYL METHYLTRANSFERASE FAMILY PROTEIN"/>
    <property type="match status" value="1"/>
</dbReference>
<dbReference type="Pfam" id="PF03492">
    <property type="entry name" value="Methyltransf_7"/>
    <property type="match status" value="1"/>
</dbReference>
<dbReference type="SUPFAM" id="SSF53335">
    <property type="entry name" value="S-adenosyl-L-methionine-dependent methyltransferases"/>
    <property type="match status" value="1"/>
</dbReference>
<accession>Q68CM3</accession>
<accession>B9VI89</accession>
<accession>F4YFI8</accession>
<accession>K9MPP6</accession>
<accession>Q5ECF6</accession>
<keyword id="KW-0017">Alkaloid metabolism</keyword>
<keyword id="KW-0460">Magnesium</keyword>
<keyword id="KW-0479">Metal-binding</keyword>
<keyword id="KW-0489">Methyltransferase</keyword>
<keyword id="KW-0949">S-adenosyl-L-methionine</keyword>
<keyword id="KW-0808">Transferase</keyword>
<name>TCS2_CAMSI</name>
<organism>
    <name type="scientific">Camellia sinensis</name>
    <name type="common">Tea plant</name>
    <name type="synonym">Thea sinensis</name>
    <dbReference type="NCBI Taxonomy" id="4442"/>
    <lineage>
        <taxon>Eukaryota</taxon>
        <taxon>Viridiplantae</taxon>
        <taxon>Streptophyta</taxon>
        <taxon>Embryophyta</taxon>
        <taxon>Tracheophyta</taxon>
        <taxon>Spermatophyta</taxon>
        <taxon>Magnoliopsida</taxon>
        <taxon>eudicotyledons</taxon>
        <taxon>Gunneridae</taxon>
        <taxon>Pentapetalae</taxon>
        <taxon>asterids</taxon>
        <taxon>Ericales</taxon>
        <taxon>Theaceae</taxon>
        <taxon>Camellia</taxon>
    </lineage>
</organism>
<comment type="function">
    <text evidence="4">May be involved in the biosynthesis of caffeine (By similarity). Catalyzes the conversion of 7-methylxanthine (7mX) to theobromine and of theobromine to caffeine (By similarity). Has 1-N-methylation activity (By similarity).</text>
</comment>
<comment type="catalytic activity">
    <reaction evidence="4">
        <text>7-methylxanthine + S-adenosyl-L-methionine = theobromine + S-adenosyl-L-homocysteine + H(+)</text>
        <dbReference type="Rhea" id="RHEA:24604"/>
        <dbReference type="ChEBI" id="CHEBI:15378"/>
        <dbReference type="ChEBI" id="CHEBI:28946"/>
        <dbReference type="ChEBI" id="CHEBI:48991"/>
        <dbReference type="ChEBI" id="CHEBI:57856"/>
        <dbReference type="ChEBI" id="CHEBI:59789"/>
        <dbReference type="EC" id="2.1.1.160"/>
    </reaction>
    <physiologicalReaction direction="left-to-right" evidence="4">
        <dbReference type="Rhea" id="RHEA:24605"/>
    </physiologicalReaction>
</comment>
<comment type="catalytic activity">
    <reaction evidence="4">
        <text>theobromine + S-adenosyl-L-methionine = caffeine + S-adenosyl-L-homocysteine + H(+)</text>
        <dbReference type="Rhea" id="RHEA:20944"/>
        <dbReference type="ChEBI" id="CHEBI:15378"/>
        <dbReference type="ChEBI" id="CHEBI:27732"/>
        <dbReference type="ChEBI" id="CHEBI:28946"/>
        <dbReference type="ChEBI" id="CHEBI:57856"/>
        <dbReference type="ChEBI" id="CHEBI:59789"/>
        <dbReference type="EC" id="2.1.1.160"/>
    </reaction>
    <physiologicalReaction direction="left-to-right" evidence="4">
        <dbReference type="Rhea" id="RHEA:20945"/>
    </physiologicalReaction>
</comment>
<comment type="catalytic activity">
    <reaction evidence="4">
        <text>1,7-dimethylxanthine + S-adenosyl-L-methionine = caffeine + S-adenosyl-L-homocysteine + H(+)</text>
        <dbReference type="Rhea" id="RHEA:10280"/>
        <dbReference type="ChEBI" id="CHEBI:15378"/>
        <dbReference type="ChEBI" id="CHEBI:25858"/>
        <dbReference type="ChEBI" id="CHEBI:27732"/>
        <dbReference type="ChEBI" id="CHEBI:57856"/>
        <dbReference type="ChEBI" id="CHEBI:59789"/>
        <dbReference type="EC" id="2.1.1.160"/>
    </reaction>
    <physiologicalReaction direction="left-to-right" evidence="4">
        <dbReference type="Rhea" id="RHEA:10281"/>
    </physiologicalReaction>
</comment>
<comment type="cofactor">
    <cofactor evidence="3">
        <name>Mg(2+)</name>
        <dbReference type="ChEBI" id="CHEBI:18420"/>
    </cofactor>
    <text evidence="3">Binds 1 Mg(2+) ion per subunit.</text>
</comment>
<comment type="pathway">
    <text evidence="4">Alkaloid biosynthesis.</text>
</comment>
<comment type="similarity">
    <text evidence="6">Belongs to the methyltransferase superfamily. Type-7 methyltransferase family.</text>
</comment>
<reference key="1">
    <citation type="submission" date="1999-08" db="EMBL/GenBank/DDBJ databases">
        <title>Molecular cloning and expression analysis of cDNA sequence encoding caffeine synthase from Camellia sinensis.</title>
        <authorList>
            <person name="Kato M."/>
            <person name="Mizuno K."/>
            <person name="Fujimura T."/>
            <person name="Ashihara H."/>
        </authorList>
    </citation>
    <scope>NUCLEOTIDE SEQUENCE [MRNA]</scope>
</reference>
<reference key="2">
    <citation type="submission" date="2005-01" db="EMBL/GenBank/DDBJ databases">
        <title>Cloning and characterization of caffeine synthase from Camellia sinensis(L.) O.Kuntze cv. UPASI-9.</title>
        <authorList>
            <person name="Rani A."/>
            <person name="Kumar S."/>
            <person name="Ahuja P.S."/>
        </authorList>
    </citation>
    <scope>NUCLEOTIDE SEQUENCE [MRNA]</scope>
</reference>
<reference key="3">
    <citation type="submission" date="2012-08" db="EMBL/GenBank/DDBJ databases">
        <title>Cloning and analysis of the N-methyltransferase gene family involving in caffeine biosynthesis of tea plant.</title>
        <authorList>
            <person name="Jin J.Q."/>
            <person name="Chen L."/>
            <person name="Yao M.Z."/>
            <person name="Ma C.L."/>
        </authorList>
    </citation>
    <scope>NUCLEOTIDE SEQUENCE [GENOMIC DNA]</scope>
</reference>
<reference key="4">
    <citation type="journal article" date="2009" name="Mol. Biotechnol.">
        <title>Caffeine biosynthesis and degradation in tea [Camellia sinensis (L.) O. Kuntze] is under developmental and seasonal regulation.</title>
        <authorList>
            <person name="Mohanpuria P."/>
            <person name="Kumar V."/>
            <person name="Joshi R."/>
            <person name="Gulati A."/>
            <person name="Ahuja P.S."/>
            <person name="Yadav S.K."/>
        </authorList>
    </citation>
    <scope>NUCLEOTIDE SEQUENCE [MRNA] OF 27-150</scope>
    <source>
        <strain>cv. Kangra jat</strain>
    </source>
</reference>
<reference key="5">
    <citation type="journal article" date="2013" name="Appl. Biochem. Biotechnol.">
        <title>Analysis of dormant bud (Banjhi) specific transcriptome of tea (Camellia sinensis (L.) O. Kuntze) from cDNA library revealed dormancy-related genes.</title>
        <authorList>
            <person name="Thirugnanasambantham K."/>
            <person name="Prabu G."/>
            <person name="Palanisamy S."/>
            <person name="Chandrabose S.R.S."/>
            <person name="Mandal A.K.A."/>
        </authorList>
    </citation>
    <scope>NUCLEOTIDE SEQUENCE [MRNA] OF 222-359</scope>
</reference>
<reference key="6">
    <citation type="journal article" date="2008" name="Phytochemistry">
        <title>Caffeine and related purine alkaloids: biosynthesis, catabolism, function and genetic engineering.</title>
        <authorList>
            <person name="Ashihara H."/>
            <person name="Sano H."/>
            <person name="Crozier A."/>
        </authorList>
    </citation>
    <scope>REVIEW ON CAFFEINE BIOSYNTHESIS</scope>
</reference>
<feature type="chain" id="PRO_0000408311" description="Probable caffeine synthase 2">
    <location>
        <begin position="1"/>
        <end position="365"/>
    </location>
</feature>
<feature type="binding site" evidence="1">
    <location>
        <position position="19"/>
    </location>
    <ligand>
        <name>S-adenosyl-L-homocysteine</name>
        <dbReference type="ChEBI" id="CHEBI:57856"/>
    </ligand>
</feature>
<feature type="binding site" evidence="1">
    <location>
        <position position="26"/>
    </location>
    <ligand>
        <name>caffeine</name>
        <dbReference type="ChEBI" id="CHEBI:27732"/>
    </ligand>
</feature>
<feature type="binding site" evidence="1">
    <location>
        <position position="62"/>
    </location>
    <ligand>
        <name>S-adenosyl-L-homocysteine</name>
        <dbReference type="ChEBI" id="CHEBI:57856"/>
    </ligand>
</feature>
<feature type="binding site" evidence="1">
    <location>
        <position position="99"/>
    </location>
    <ligand>
        <name>S-adenosyl-L-homocysteine</name>
        <dbReference type="ChEBI" id="CHEBI:57856"/>
    </ligand>
</feature>
<feature type="binding site" evidence="1">
    <location>
        <position position="100"/>
    </location>
    <ligand>
        <name>S-adenosyl-L-homocysteine</name>
        <dbReference type="ChEBI" id="CHEBI:57856"/>
    </ligand>
</feature>
<feature type="binding site" evidence="1">
    <location>
        <position position="134"/>
    </location>
    <ligand>
        <name>S-adenosyl-L-homocysteine</name>
        <dbReference type="ChEBI" id="CHEBI:57856"/>
    </ligand>
</feature>
<feature type="binding site" evidence="1">
    <location>
        <position position="135"/>
    </location>
    <ligand>
        <name>S-adenosyl-L-homocysteine</name>
        <dbReference type="ChEBI" id="CHEBI:57856"/>
    </ligand>
</feature>
<feature type="binding site" evidence="1">
    <location>
        <position position="152"/>
    </location>
    <ligand>
        <name>caffeine</name>
        <dbReference type="ChEBI" id="CHEBI:27732"/>
    </ligand>
</feature>
<feature type="binding site" evidence="1">
    <location>
        <position position="155"/>
    </location>
    <ligand>
        <name>caffeine</name>
        <dbReference type="ChEBI" id="CHEBI:27732"/>
    </ligand>
</feature>
<feature type="binding site" evidence="1">
    <location>
        <position position="156"/>
    </location>
    <ligand>
        <name>caffeine</name>
        <dbReference type="ChEBI" id="CHEBI:27732"/>
    </ligand>
</feature>
<feature type="binding site" evidence="3">
    <location>
        <position position="173"/>
    </location>
    <ligand>
        <name>Mg(2+)</name>
        <dbReference type="ChEBI" id="CHEBI:18420"/>
    </ligand>
</feature>
<feature type="binding site" evidence="1">
    <location>
        <position position="221"/>
    </location>
    <ligand>
        <name>caffeine</name>
        <dbReference type="ChEBI" id="CHEBI:27732"/>
    </ligand>
</feature>
<feature type="binding site" evidence="3">
    <location>
        <position position="259"/>
    </location>
    <ligand>
        <name>Mg(2+)</name>
        <dbReference type="ChEBI" id="CHEBI:18420"/>
    </ligand>
</feature>
<feature type="binding site" evidence="3">
    <location>
        <position position="261"/>
    </location>
    <ligand>
        <name>Mg(2+)</name>
        <dbReference type="ChEBI" id="CHEBI:18420"/>
    </ligand>
</feature>
<feature type="binding site" evidence="3">
    <location>
        <position position="262"/>
    </location>
    <ligand>
        <name>Mg(2+)</name>
        <dbReference type="ChEBI" id="CHEBI:18420"/>
    </ligand>
</feature>
<feature type="binding site" evidence="1">
    <location>
        <position position="317"/>
    </location>
    <ligand>
        <name>caffeine</name>
        <dbReference type="ChEBI" id="CHEBI:27732"/>
    </ligand>
</feature>
<feature type="site" description="Involved in substrate discrimination" evidence="4">
    <location>
        <position position="149"/>
    </location>
</feature>
<feature type="site" description="Involved in substrate discrimination" evidence="2">
    <location>
        <position position="221"/>
    </location>
</feature>
<feature type="site" description="Involved in substrate discrimination" evidence="4">
    <location>
        <position position="265"/>
    </location>
</feature>
<feature type="site" description="Involved in substrate discrimination" evidence="4">
    <location>
        <position position="313"/>
    </location>
</feature>
<feature type="site" description="Involved in substrate discrimination" evidence="4">
    <location>
        <position position="328"/>
    </location>
</feature>
<feature type="sequence conflict" description="In Ref. 4; ACM07420." evidence="6" ref="4">
    <original>N</original>
    <variation>T</variation>
    <location>
        <position position="39"/>
    </location>
</feature>
<feature type="sequence conflict" description="In Ref. 4; ACM07420." evidence="6" ref="4">
    <original>L</original>
    <variation>H</variation>
    <location>
        <position position="52"/>
    </location>
</feature>
<feature type="sequence conflict" description="In Ref. 2; AAW88351." evidence="6" ref="2">
    <original>M</original>
    <variation>V</variation>
    <location>
        <position position="79"/>
    </location>
</feature>
<feature type="sequence conflict" description="In Ref. 2; AAW88351 and 4; ACM07420." evidence="6" ref="2 4">
    <original>P</original>
    <variation>Q</variation>
    <location>
        <position position="113"/>
    </location>
</feature>
<feature type="sequence conflict" description="In Ref. 2; AAW88351." evidence="6" ref="2">
    <original>F</original>
    <variation>S</variation>
    <location>
        <position position="235"/>
    </location>
</feature>
<feature type="sequence conflict" description="In Ref. 2; AAW88351." evidence="6" ref="2">
    <original>N</original>
    <variation>D</variation>
    <location>
        <position position="301"/>
    </location>
</feature>
<feature type="sequence conflict" description="In Ref. 2; AAW88351 and 5; AEC11049." evidence="6" ref="2 5">
    <original>F</original>
    <variation>L</variation>
    <location>
        <position position="346"/>
    </location>
</feature>
<sequence>MKEVKEALFMNKGEGESSYAQNSSFTQTVTSMTMPVLENAVETLFSKDFHLLQALNAVDLGCAAGPTTFTVISTIKRMMEKKCRELNCQTLELQVYLNDLPGNDFNTLFKGLPSKVVGNKCEEVSCYVVGVPGSFHGRLFPRNSLHLVHSCYSVHWLTQAPKGLTSKEGLALNKGKIYISKTSPPVVREAYLSQFHEDFTMFLNSRSQEVVPNGCMVLILRGRLSSDPSDMGSCFTWELLAVAIAELVSQGLIDEDKLDTFNVPSYFPSLEEVKDIVERNGSFTIDHMEGFELDSPEMQENDKWVRGEKFATVARAFTEPIISNQFGHEIMDKLYEKFTHIVVSDFEAKIPKITSIILVLSKIVG</sequence>